<keyword id="KW-0067">ATP-binding</keyword>
<keyword id="KW-0133">Cell shape</keyword>
<keyword id="KW-0961">Cell wall biogenesis/degradation</keyword>
<keyword id="KW-0963">Cytoplasm</keyword>
<keyword id="KW-0436">Ligase</keyword>
<keyword id="KW-0460">Magnesium</keyword>
<keyword id="KW-0464">Manganese</keyword>
<keyword id="KW-0479">Metal-binding</keyword>
<keyword id="KW-0547">Nucleotide-binding</keyword>
<keyword id="KW-0573">Peptidoglycan synthesis</keyword>
<protein>
    <recommendedName>
        <fullName evidence="2">D-alanine--D-alanine ligase</fullName>
        <ecNumber evidence="2">6.3.2.4</ecNumber>
    </recommendedName>
    <alternativeName>
        <fullName evidence="2">D-Ala-D-Ala ligase</fullName>
    </alternativeName>
    <alternativeName>
        <fullName evidence="2">D-alanylalanine synthetase</fullName>
    </alternativeName>
</protein>
<sequence>MHKYQTHWVEHSIVKILSSTGKKHIALMAGGMSAEREVSLVSSEGVSKALIELGYRVTFIDMGADIAVRLQEIKPDIVFNCLHGTYGEDGGLPGLLNIMRIPYTHSGVLSSALAFDKIHSRIWFLTNNINMAESIVVNKSDNIKNDPMKRPYVIKPLTQGSSIGVEVIFAEDDFNFADYDFPYGDQVIIEQYIKGRELQVAVLNGKALGALEIKLLKNRFYDYETKYTAGFADHLCPAPLPANLYEKLLIESEKIYKTMNCKGPARAEFILEEQTNKLYALEINTHPGMMSLSIVPEIAAYAGINFTNLIEEIIKTASFES</sequence>
<gene>
    <name evidence="2" type="primary">ddl</name>
    <name type="ordered locus">A1G_01910</name>
</gene>
<comment type="function">
    <text evidence="2">Cell wall formation.</text>
</comment>
<comment type="catalytic activity">
    <reaction evidence="2">
        <text>2 D-alanine + ATP = D-alanyl-D-alanine + ADP + phosphate + H(+)</text>
        <dbReference type="Rhea" id="RHEA:11224"/>
        <dbReference type="ChEBI" id="CHEBI:15378"/>
        <dbReference type="ChEBI" id="CHEBI:30616"/>
        <dbReference type="ChEBI" id="CHEBI:43474"/>
        <dbReference type="ChEBI" id="CHEBI:57416"/>
        <dbReference type="ChEBI" id="CHEBI:57822"/>
        <dbReference type="ChEBI" id="CHEBI:456216"/>
        <dbReference type="EC" id="6.3.2.4"/>
    </reaction>
</comment>
<comment type="cofactor">
    <cofactor evidence="1">
        <name>Mg(2+)</name>
        <dbReference type="ChEBI" id="CHEBI:18420"/>
    </cofactor>
    <cofactor evidence="1">
        <name>Mn(2+)</name>
        <dbReference type="ChEBI" id="CHEBI:29035"/>
    </cofactor>
    <text evidence="1">Binds 2 magnesium or manganese ions per subunit.</text>
</comment>
<comment type="pathway">
    <text evidence="2">Cell wall biogenesis; peptidoglycan biosynthesis.</text>
</comment>
<comment type="subcellular location">
    <subcellularLocation>
        <location evidence="2">Cytoplasm</location>
    </subcellularLocation>
</comment>
<comment type="similarity">
    <text evidence="2">Belongs to the D-alanine--D-alanine ligase family.</text>
</comment>
<dbReference type="EC" id="6.3.2.4" evidence="2"/>
<dbReference type="EMBL" id="CP000848">
    <property type="protein sequence ID" value="ABV75946.1"/>
    <property type="molecule type" value="Genomic_DNA"/>
</dbReference>
<dbReference type="RefSeq" id="WP_012150548.1">
    <property type="nucleotide sequence ID" value="NZ_CP121767.1"/>
</dbReference>
<dbReference type="SMR" id="A8GRC1"/>
<dbReference type="GeneID" id="79937110"/>
<dbReference type="KEGG" id="rri:A1G_01910"/>
<dbReference type="HOGENOM" id="CLU_039268_1_1_5"/>
<dbReference type="UniPathway" id="UPA00219"/>
<dbReference type="Proteomes" id="UP000006832">
    <property type="component" value="Chromosome"/>
</dbReference>
<dbReference type="GO" id="GO:0005737">
    <property type="term" value="C:cytoplasm"/>
    <property type="evidence" value="ECO:0007669"/>
    <property type="project" value="UniProtKB-SubCell"/>
</dbReference>
<dbReference type="GO" id="GO:0005524">
    <property type="term" value="F:ATP binding"/>
    <property type="evidence" value="ECO:0007669"/>
    <property type="project" value="UniProtKB-KW"/>
</dbReference>
<dbReference type="GO" id="GO:0008716">
    <property type="term" value="F:D-alanine-D-alanine ligase activity"/>
    <property type="evidence" value="ECO:0007669"/>
    <property type="project" value="UniProtKB-UniRule"/>
</dbReference>
<dbReference type="GO" id="GO:0046872">
    <property type="term" value="F:metal ion binding"/>
    <property type="evidence" value="ECO:0007669"/>
    <property type="project" value="UniProtKB-KW"/>
</dbReference>
<dbReference type="GO" id="GO:0071555">
    <property type="term" value="P:cell wall organization"/>
    <property type="evidence" value="ECO:0007669"/>
    <property type="project" value="UniProtKB-KW"/>
</dbReference>
<dbReference type="GO" id="GO:0009252">
    <property type="term" value="P:peptidoglycan biosynthetic process"/>
    <property type="evidence" value="ECO:0007669"/>
    <property type="project" value="UniProtKB-UniRule"/>
</dbReference>
<dbReference type="GO" id="GO:0008360">
    <property type="term" value="P:regulation of cell shape"/>
    <property type="evidence" value="ECO:0007669"/>
    <property type="project" value="UniProtKB-KW"/>
</dbReference>
<dbReference type="Gene3D" id="3.40.50.20">
    <property type="match status" value="1"/>
</dbReference>
<dbReference type="Gene3D" id="3.30.1490.20">
    <property type="entry name" value="ATP-grasp fold, A domain"/>
    <property type="match status" value="1"/>
</dbReference>
<dbReference type="Gene3D" id="3.30.470.20">
    <property type="entry name" value="ATP-grasp fold, B domain"/>
    <property type="match status" value="1"/>
</dbReference>
<dbReference type="HAMAP" id="MF_00047">
    <property type="entry name" value="Dala_Dala_lig"/>
    <property type="match status" value="1"/>
</dbReference>
<dbReference type="InterPro" id="IPR011761">
    <property type="entry name" value="ATP-grasp"/>
</dbReference>
<dbReference type="InterPro" id="IPR013815">
    <property type="entry name" value="ATP_grasp_subdomain_1"/>
</dbReference>
<dbReference type="InterPro" id="IPR000291">
    <property type="entry name" value="D-Ala_lig_Van_CS"/>
</dbReference>
<dbReference type="InterPro" id="IPR005905">
    <property type="entry name" value="D_ala_D_ala"/>
</dbReference>
<dbReference type="InterPro" id="IPR011095">
    <property type="entry name" value="Dala_Dala_lig_C"/>
</dbReference>
<dbReference type="InterPro" id="IPR011127">
    <property type="entry name" value="Dala_Dala_lig_N"/>
</dbReference>
<dbReference type="InterPro" id="IPR016185">
    <property type="entry name" value="PreATP-grasp_dom_sf"/>
</dbReference>
<dbReference type="NCBIfam" id="TIGR01205">
    <property type="entry name" value="D_ala_D_alaTIGR"/>
    <property type="match status" value="1"/>
</dbReference>
<dbReference type="NCBIfam" id="NF002378">
    <property type="entry name" value="PRK01372.1"/>
    <property type="match status" value="1"/>
</dbReference>
<dbReference type="PANTHER" id="PTHR23132">
    <property type="entry name" value="D-ALANINE--D-ALANINE LIGASE"/>
    <property type="match status" value="1"/>
</dbReference>
<dbReference type="PANTHER" id="PTHR23132:SF23">
    <property type="entry name" value="D-ALANINE--D-ALANINE LIGASE B"/>
    <property type="match status" value="1"/>
</dbReference>
<dbReference type="Pfam" id="PF07478">
    <property type="entry name" value="Dala_Dala_lig_C"/>
    <property type="match status" value="1"/>
</dbReference>
<dbReference type="Pfam" id="PF01820">
    <property type="entry name" value="Dala_Dala_lig_N"/>
    <property type="match status" value="1"/>
</dbReference>
<dbReference type="PIRSF" id="PIRSF039102">
    <property type="entry name" value="Ddl/VanB"/>
    <property type="match status" value="1"/>
</dbReference>
<dbReference type="SUPFAM" id="SSF56059">
    <property type="entry name" value="Glutathione synthetase ATP-binding domain-like"/>
    <property type="match status" value="1"/>
</dbReference>
<dbReference type="SUPFAM" id="SSF52440">
    <property type="entry name" value="PreATP-grasp domain"/>
    <property type="match status" value="1"/>
</dbReference>
<dbReference type="PROSITE" id="PS50975">
    <property type="entry name" value="ATP_GRASP"/>
    <property type="match status" value="1"/>
</dbReference>
<dbReference type="PROSITE" id="PS00843">
    <property type="entry name" value="DALA_DALA_LIGASE_1"/>
    <property type="match status" value="1"/>
</dbReference>
<dbReference type="PROSITE" id="PS00844">
    <property type="entry name" value="DALA_DALA_LIGASE_2"/>
    <property type="match status" value="1"/>
</dbReference>
<name>DDL_RICRS</name>
<feature type="chain" id="PRO_1000030488" description="D-alanine--D-alanine ligase">
    <location>
        <begin position="1"/>
        <end position="321"/>
    </location>
</feature>
<feature type="domain" description="ATP-grasp" evidence="2">
    <location>
        <begin position="121"/>
        <end position="315"/>
    </location>
</feature>
<feature type="binding site" evidence="2">
    <location>
        <begin position="147"/>
        <end position="199"/>
    </location>
    <ligand>
        <name>ATP</name>
        <dbReference type="ChEBI" id="CHEBI:30616"/>
    </ligand>
</feature>
<feature type="binding site" evidence="2">
    <location>
        <position position="268"/>
    </location>
    <ligand>
        <name>Mg(2+)</name>
        <dbReference type="ChEBI" id="CHEBI:18420"/>
        <label>1</label>
    </ligand>
</feature>
<feature type="binding site" evidence="2">
    <location>
        <position position="282"/>
    </location>
    <ligand>
        <name>Mg(2+)</name>
        <dbReference type="ChEBI" id="CHEBI:18420"/>
        <label>1</label>
    </ligand>
</feature>
<feature type="binding site" evidence="2">
    <location>
        <position position="282"/>
    </location>
    <ligand>
        <name>Mg(2+)</name>
        <dbReference type="ChEBI" id="CHEBI:18420"/>
        <label>2</label>
    </ligand>
</feature>
<feature type="binding site" evidence="2">
    <location>
        <position position="284"/>
    </location>
    <ligand>
        <name>Mg(2+)</name>
        <dbReference type="ChEBI" id="CHEBI:18420"/>
        <label>2</label>
    </ligand>
</feature>
<organism>
    <name type="scientific">Rickettsia rickettsii (strain Sheila Smith)</name>
    <dbReference type="NCBI Taxonomy" id="392021"/>
    <lineage>
        <taxon>Bacteria</taxon>
        <taxon>Pseudomonadati</taxon>
        <taxon>Pseudomonadota</taxon>
        <taxon>Alphaproteobacteria</taxon>
        <taxon>Rickettsiales</taxon>
        <taxon>Rickettsiaceae</taxon>
        <taxon>Rickettsieae</taxon>
        <taxon>Rickettsia</taxon>
        <taxon>spotted fever group</taxon>
    </lineage>
</organism>
<reference key="1">
    <citation type="submission" date="2007-09" db="EMBL/GenBank/DDBJ databases">
        <title>Complete genome sequence of Rickettsia rickettsii.</title>
        <authorList>
            <person name="Madan A."/>
            <person name="Fahey J."/>
            <person name="Helton E."/>
            <person name="Ketteman M."/>
            <person name="Madan A."/>
            <person name="Rodrigues S."/>
            <person name="Sanchez A."/>
            <person name="Dasch G."/>
            <person name="Eremeeva M."/>
        </authorList>
    </citation>
    <scope>NUCLEOTIDE SEQUENCE [LARGE SCALE GENOMIC DNA]</scope>
    <source>
        <strain>Sheila Smith</strain>
    </source>
</reference>
<evidence type="ECO:0000250" key="1"/>
<evidence type="ECO:0000255" key="2">
    <source>
        <dbReference type="HAMAP-Rule" id="MF_00047"/>
    </source>
</evidence>
<proteinExistence type="inferred from homology"/>
<accession>A8GRC1</accession>